<keyword id="KW-0002">3D-structure</keyword>
<keyword id="KW-0446">Lipid-binding</keyword>
<keyword id="KW-1185">Reference proteome</keyword>
<dbReference type="EMBL" id="AE007317">
    <property type="protein sequence ID" value="AAK99823.1"/>
    <property type="molecule type" value="Genomic_DNA"/>
</dbReference>
<dbReference type="PIR" id="C97999">
    <property type="entry name" value="C97999"/>
</dbReference>
<dbReference type="RefSeq" id="NP_358613.1">
    <property type="nucleotide sequence ID" value="NC_003098.1"/>
</dbReference>
<dbReference type="RefSeq" id="WP_000161389.1">
    <property type="nucleotide sequence ID" value="NC_003098.1"/>
</dbReference>
<dbReference type="PDB" id="6NR1">
    <property type="method" value="X-ray"/>
    <property type="resolution" value="2.10 A"/>
    <property type="chains" value="A/B=1-279"/>
</dbReference>
<dbReference type="PDBsum" id="6NR1"/>
<dbReference type="SMR" id="Q8DPT4"/>
<dbReference type="STRING" id="171101.spr1019"/>
<dbReference type="KEGG" id="spr:spr1019"/>
<dbReference type="PATRIC" id="fig|171101.6.peg.1109"/>
<dbReference type="eggNOG" id="COG1307">
    <property type="taxonomic scope" value="Bacteria"/>
</dbReference>
<dbReference type="HOGENOM" id="CLU_048251_3_2_9"/>
<dbReference type="Proteomes" id="UP000000586">
    <property type="component" value="Chromosome"/>
</dbReference>
<dbReference type="GO" id="GO:0008289">
    <property type="term" value="F:lipid binding"/>
    <property type="evidence" value="ECO:0007669"/>
    <property type="project" value="UniProtKB-KW"/>
</dbReference>
<dbReference type="Gene3D" id="3.30.1180.10">
    <property type="match status" value="1"/>
</dbReference>
<dbReference type="Gene3D" id="3.40.50.10170">
    <property type="match status" value="1"/>
</dbReference>
<dbReference type="InterPro" id="IPR003797">
    <property type="entry name" value="DegV"/>
</dbReference>
<dbReference type="InterPro" id="IPR043168">
    <property type="entry name" value="DegV_C"/>
</dbReference>
<dbReference type="InterPro" id="IPR050270">
    <property type="entry name" value="DegV_domain_contain"/>
</dbReference>
<dbReference type="NCBIfam" id="TIGR00762">
    <property type="entry name" value="DegV"/>
    <property type="match status" value="1"/>
</dbReference>
<dbReference type="PANTHER" id="PTHR33434">
    <property type="entry name" value="DEGV DOMAIN-CONTAINING PROTEIN DR_1986-RELATED"/>
    <property type="match status" value="1"/>
</dbReference>
<dbReference type="PANTHER" id="PTHR33434:SF8">
    <property type="entry name" value="DEGV DOMAIN-CONTAINING PROTEIN SPR1019"/>
    <property type="match status" value="1"/>
</dbReference>
<dbReference type="Pfam" id="PF02645">
    <property type="entry name" value="DegV"/>
    <property type="match status" value="1"/>
</dbReference>
<dbReference type="SUPFAM" id="SSF82549">
    <property type="entry name" value="DAK1/DegV-like"/>
    <property type="match status" value="1"/>
</dbReference>
<dbReference type="PROSITE" id="PS51482">
    <property type="entry name" value="DEGV"/>
    <property type="match status" value="1"/>
</dbReference>
<reference key="1">
    <citation type="journal article" date="2001" name="J. Bacteriol.">
        <title>Genome of the bacterium Streptococcus pneumoniae strain R6.</title>
        <authorList>
            <person name="Hoskins J."/>
            <person name="Alborn W.E. Jr."/>
            <person name="Arnold J."/>
            <person name="Blaszczak L.C."/>
            <person name="Burgett S."/>
            <person name="DeHoff B.S."/>
            <person name="Estrem S.T."/>
            <person name="Fritz L."/>
            <person name="Fu D.-J."/>
            <person name="Fuller W."/>
            <person name="Geringer C."/>
            <person name="Gilmour R."/>
            <person name="Glass J.S."/>
            <person name="Khoja H."/>
            <person name="Kraft A.R."/>
            <person name="Lagace R.E."/>
            <person name="LeBlanc D.J."/>
            <person name="Lee L.N."/>
            <person name="Lefkowitz E.J."/>
            <person name="Lu J."/>
            <person name="Matsushima P."/>
            <person name="McAhren S.M."/>
            <person name="McHenney M."/>
            <person name="McLeaster K."/>
            <person name="Mundy C.W."/>
            <person name="Nicas T.I."/>
            <person name="Norris F.H."/>
            <person name="O'Gara M."/>
            <person name="Peery R.B."/>
            <person name="Robertson G.T."/>
            <person name="Rockey P."/>
            <person name="Sun P.-M."/>
            <person name="Winkler M.E."/>
            <person name="Yang Y."/>
            <person name="Young-Bellido M."/>
            <person name="Zhao G."/>
            <person name="Zook C.A."/>
            <person name="Baltz R.H."/>
            <person name="Jaskunas S.R."/>
            <person name="Rosteck P.R. Jr."/>
            <person name="Skatrud P.L."/>
            <person name="Glass J.I."/>
        </authorList>
    </citation>
    <scope>NUCLEOTIDE SEQUENCE [LARGE SCALE GENOMIC DNA]</scope>
    <source>
        <strain>ATCC BAA-255 / R6</strain>
    </source>
</reference>
<accession>Q8DPT4</accession>
<protein>
    <recommendedName>
        <fullName>DegV domain-containing protein spr1019</fullName>
    </recommendedName>
</protein>
<sequence>MTKIKIVTDSSVTIEPELVKQLDITIVPLSVMIDNVVYSDADLKEEGKFLQLMQESKNLPKTSQPPVGVFAEIFEDLCKDGGQILAIHMSHALSGTVEAARQGASLSTADVIVVDSSFTDQALKFQVVEAAKLAQEGKDMEAILSHVEEVKNHTELYIGVSTLENLVKGGRIGRVTGLLSSLLNIRVVMQMKDHELQPMVKGRGTKTFKKWLDELITSLSERAVAEIGISYSGSDDWAKEMKESLQAYVEKPISVLETGSIIQTHTGENAWAILIRYHS</sequence>
<name>Y1019_STRR6</name>
<proteinExistence type="evidence at protein level"/>
<comment type="function">
    <text evidence="1">May bind long-chain fatty acids, such as palmitate, and may play a role in lipid transport or fatty acid metabolism.</text>
</comment>
<evidence type="ECO:0000250" key="1"/>
<evidence type="ECO:0000250" key="2">
    <source>
        <dbReference type="UniProtKB" id="Q9X1H9"/>
    </source>
</evidence>
<evidence type="ECO:0000255" key="3">
    <source>
        <dbReference type="PROSITE-ProRule" id="PRU00815"/>
    </source>
</evidence>
<evidence type="ECO:0007829" key="4">
    <source>
        <dbReference type="PDB" id="6NR1"/>
    </source>
</evidence>
<gene>
    <name type="ordered locus">spr1019</name>
</gene>
<feature type="chain" id="PRO_0000209798" description="DegV domain-containing protein spr1019">
    <location>
        <begin position="1"/>
        <end position="279"/>
    </location>
</feature>
<feature type="domain" description="DegV" evidence="3">
    <location>
        <begin position="4"/>
        <end position="277"/>
    </location>
</feature>
<feature type="binding site" evidence="2">
    <location>
        <position position="62"/>
    </location>
    <ligand>
        <name>hexadecanoate</name>
        <dbReference type="ChEBI" id="CHEBI:7896"/>
    </ligand>
</feature>
<feature type="binding site" evidence="2">
    <location>
        <position position="94"/>
    </location>
    <ligand>
        <name>hexadecanoate</name>
        <dbReference type="ChEBI" id="CHEBI:7896"/>
    </ligand>
</feature>
<feature type="strand" evidence="4">
    <location>
        <begin position="5"/>
        <end position="9"/>
    </location>
</feature>
<feature type="helix" evidence="4">
    <location>
        <begin position="16"/>
        <end position="22"/>
    </location>
</feature>
<feature type="strand" evidence="4">
    <location>
        <begin position="25"/>
        <end position="27"/>
    </location>
</feature>
<feature type="strand" evidence="4">
    <location>
        <begin position="30"/>
        <end position="33"/>
    </location>
</feature>
<feature type="strand" evidence="4">
    <location>
        <begin position="36"/>
        <end position="39"/>
    </location>
</feature>
<feature type="helix" evidence="4">
    <location>
        <begin position="40"/>
        <end position="42"/>
    </location>
</feature>
<feature type="helix" evidence="4">
    <location>
        <begin position="48"/>
        <end position="55"/>
    </location>
</feature>
<feature type="strand" evidence="4">
    <location>
        <begin position="61"/>
        <end position="63"/>
    </location>
</feature>
<feature type="helix" evidence="4">
    <location>
        <begin position="67"/>
        <end position="77"/>
    </location>
</feature>
<feature type="helix" evidence="4">
    <location>
        <begin position="78"/>
        <end position="80"/>
    </location>
</feature>
<feature type="strand" evidence="4">
    <location>
        <begin position="84"/>
        <end position="88"/>
    </location>
</feature>
<feature type="turn" evidence="4">
    <location>
        <begin position="91"/>
        <end position="93"/>
    </location>
</feature>
<feature type="helix" evidence="4">
    <location>
        <begin position="96"/>
        <end position="106"/>
    </location>
</feature>
<feature type="strand" evidence="4">
    <location>
        <begin position="107"/>
        <end position="109"/>
    </location>
</feature>
<feature type="strand" evidence="4">
    <location>
        <begin position="111"/>
        <end position="115"/>
    </location>
</feature>
<feature type="helix" evidence="4">
    <location>
        <begin position="120"/>
        <end position="135"/>
    </location>
</feature>
<feature type="helix" evidence="4">
    <location>
        <begin position="140"/>
        <end position="152"/>
    </location>
</feature>
<feature type="strand" evidence="4">
    <location>
        <begin position="154"/>
        <end position="161"/>
    </location>
</feature>
<feature type="helix" evidence="4">
    <location>
        <begin position="164"/>
        <end position="169"/>
    </location>
</feature>
<feature type="helix" evidence="4">
    <location>
        <begin position="171"/>
        <end position="174"/>
    </location>
</feature>
<feature type="strand" evidence="4">
    <location>
        <begin position="183"/>
        <end position="192"/>
    </location>
</feature>
<feature type="strand" evidence="4">
    <location>
        <begin position="195"/>
        <end position="204"/>
    </location>
</feature>
<feature type="helix" evidence="4">
    <location>
        <begin position="207"/>
        <end position="218"/>
    </location>
</feature>
<feature type="turn" evidence="4">
    <location>
        <begin position="219"/>
        <end position="221"/>
    </location>
</feature>
<feature type="strand" evidence="4">
    <location>
        <begin position="224"/>
        <end position="233"/>
    </location>
</feature>
<feature type="helix" evidence="4">
    <location>
        <begin position="236"/>
        <end position="245"/>
    </location>
</feature>
<feature type="helix" evidence="4">
    <location>
        <begin position="246"/>
        <end position="248"/>
    </location>
</feature>
<feature type="strand" evidence="4">
    <location>
        <begin position="254"/>
        <end position="257"/>
    </location>
</feature>
<feature type="helix" evidence="4">
    <location>
        <begin position="260"/>
        <end position="266"/>
    </location>
</feature>
<feature type="strand" evidence="4">
    <location>
        <begin position="271"/>
        <end position="277"/>
    </location>
</feature>
<organism>
    <name type="scientific">Streptococcus pneumoniae (strain ATCC BAA-255 / R6)</name>
    <dbReference type="NCBI Taxonomy" id="171101"/>
    <lineage>
        <taxon>Bacteria</taxon>
        <taxon>Bacillati</taxon>
        <taxon>Bacillota</taxon>
        <taxon>Bacilli</taxon>
        <taxon>Lactobacillales</taxon>
        <taxon>Streptococcaceae</taxon>
        <taxon>Streptococcus</taxon>
    </lineage>
</organism>